<protein>
    <recommendedName>
        <fullName evidence="1">Hydroxylamine reductase</fullName>
        <ecNumber evidence="1">1.7.99.1</ecNumber>
    </recommendedName>
    <alternativeName>
        <fullName evidence="1">Hybrid-cluster protein</fullName>
        <shortName evidence="1">HCP</shortName>
    </alternativeName>
    <alternativeName>
        <fullName evidence="1">Prismane protein</fullName>
    </alternativeName>
</protein>
<accession>B5R885</accession>
<feature type="chain" id="PRO_1000092347" description="Hydroxylamine reductase">
    <location>
        <begin position="1"/>
        <end position="550"/>
    </location>
</feature>
<feature type="binding site" evidence="1">
    <location>
        <position position="3"/>
    </location>
    <ligand>
        <name>[2Fe-2S] cluster</name>
        <dbReference type="ChEBI" id="CHEBI:190135"/>
    </ligand>
</feature>
<feature type="binding site" evidence="1">
    <location>
        <position position="6"/>
    </location>
    <ligand>
        <name>[2Fe-2S] cluster</name>
        <dbReference type="ChEBI" id="CHEBI:190135"/>
    </ligand>
</feature>
<feature type="binding site" evidence="1">
    <location>
        <position position="18"/>
    </location>
    <ligand>
        <name>[2Fe-2S] cluster</name>
        <dbReference type="ChEBI" id="CHEBI:190135"/>
    </ligand>
</feature>
<feature type="binding site" evidence="1">
    <location>
        <position position="25"/>
    </location>
    <ligand>
        <name>[2Fe-2S] cluster</name>
        <dbReference type="ChEBI" id="CHEBI:190135"/>
    </ligand>
</feature>
<feature type="binding site" evidence="1">
    <location>
        <position position="249"/>
    </location>
    <ligand>
        <name>hybrid [4Fe-2O-2S] cluster</name>
        <dbReference type="ChEBI" id="CHEBI:60519"/>
    </ligand>
</feature>
<feature type="binding site" evidence="1">
    <location>
        <position position="273"/>
    </location>
    <ligand>
        <name>hybrid [4Fe-2O-2S] cluster</name>
        <dbReference type="ChEBI" id="CHEBI:60519"/>
    </ligand>
</feature>
<feature type="binding site" evidence="1">
    <location>
        <position position="317"/>
    </location>
    <ligand>
        <name>hybrid [4Fe-2O-2S] cluster</name>
        <dbReference type="ChEBI" id="CHEBI:60519"/>
    </ligand>
</feature>
<feature type="binding site" description="via persulfide group" evidence="1">
    <location>
        <position position="405"/>
    </location>
    <ligand>
        <name>hybrid [4Fe-2O-2S] cluster</name>
        <dbReference type="ChEBI" id="CHEBI:60519"/>
    </ligand>
</feature>
<feature type="binding site" evidence="1">
    <location>
        <position position="433"/>
    </location>
    <ligand>
        <name>hybrid [4Fe-2O-2S] cluster</name>
        <dbReference type="ChEBI" id="CHEBI:60519"/>
    </ligand>
</feature>
<feature type="binding site" evidence="1">
    <location>
        <position position="458"/>
    </location>
    <ligand>
        <name>hybrid [4Fe-2O-2S] cluster</name>
        <dbReference type="ChEBI" id="CHEBI:60519"/>
    </ligand>
</feature>
<feature type="binding site" evidence="1">
    <location>
        <position position="492"/>
    </location>
    <ligand>
        <name>hybrid [4Fe-2O-2S] cluster</name>
        <dbReference type="ChEBI" id="CHEBI:60519"/>
    </ligand>
</feature>
<feature type="binding site" evidence="1">
    <location>
        <position position="494"/>
    </location>
    <ligand>
        <name>hybrid [4Fe-2O-2S] cluster</name>
        <dbReference type="ChEBI" id="CHEBI:60519"/>
    </ligand>
</feature>
<feature type="modified residue" description="Cysteine persulfide" evidence="1">
    <location>
        <position position="405"/>
    </location>
</feature>
<comment type="function">
    <text evidence="1">Catalyzes the reduction of hydroxylamine to form NH(3) and H(2)O.</text>
</comment>
<comment type="catalytic activity">
    <reaction evidence="1">
        <text>A + NH4(+) + H2O = hydroxylamine + AH2 + H(+)</text>
        <dbReference type="Rhea" id="RHEA:22052"/>
        <dbReference type="ChEBI" id="CHEBI:13193"/>
        <dbReference type="ChEBI" id="CHEBI:15377"/>
        <dbReference type="ChEBI" id="CHEBI:15378"/>
        <dbReference type="ChEBI" id="CHEBI:15429"/>
        <dbReference type="ChEBI" id="CHEBI:17499"/>
        <dbReference type="ChEBI" id="CHEBI:28938"/>
        <dbReference type="EC" id="1.7.99.1"/>
    </reaction>
</comment>
<comment type="cofactor">
    <cofactor evidence="1">
        <name>[2Fe-2S] cluster</name>
        <dbReference type="ChEBI" id="CHEBI:190135"/>
    </cofactor>
    <text evidence="1">Binds 1 [2Fe-2S] cluster.</text>
</comment>
<comment type="cofactor">
    <cofactor evidence="1">
        <name>hybrid [4Fe-2O-2S] cluster</name>
        <dbReference type="ChEBI" id="CHEBI:60519"/>
    </cofactor>
    <text evidence="1">Binds 1 hybrid [4Fe-2O-2S] cluster.</text>
</comment>
<comment type="subcellular location">
    <subcellularLocation>
        <location evidence="1">Cytoplasm</location>
    </subcellularLocation>
</comment>
<comment type="similarity">
    <text evidence="1">Belongs to the HCP family.</text>
</comment>
<organism>
    <name type="scientific">Salmonella gallinarum (strain 287/91 / NCTC 13346)</name>
    <dbReference type="NCBI Taxonomy" id="550538"/>
    <lineage>
        <taxon>Bacteria</taxon>
        <taxon>Pseudomonadati</taxon>
        <taxon>Pseudomonadota</taxon>
        <taxon>Gammaproteobacteria</taxon>
        <taxon>Enterobacterales</taxon>
        <taxon>Enterobacteriaceae</taxon>
        <taxon>Salmonella</taxon>
    </lineage>
</organism>
<proteinExistence type="inferred from homology"/>
<name>HCP_SALG2</name>
<gene>
    <name evidence="1" type="primary">hcp</name>
    <name type="ordered locus">SG0880</name>
</gene>
<reference key="1">
    <citation type="journal article" date="2008" name="Genome Res.">
        <title>Comparative genome analysis of Salmonella enteritidis PT4 and Salmonella gallinarum 287/91 provides insights into evolutionary and host adaptation pathways.</title>
        <authorList>
            <person name="Thomson N.R."/>
            <person name="Clayton D.J."/>
            <person name="Windhorst D."/>
            <person name="Vernikos G."/>
            <person name="Davidson S."/>
            <person name="Churcher C."/>
            <person name="Quail M.A."/>
            <person name="Stevens M."/>
            <person name="Jones M.A."/>
            <person name="Watson M."/>
            <person name="Barron A."/>
            <person name="Layton A."/>
            <person name="Pickard D."/>
            <person name="Kingsley R.A."/>
            <person name="Bignell A."/>
            <person name="Clark L."/>
            <person name="Harris B."/>
            <person name="Ormond D."/>
            <person name="Abdellah Z."/>
            <person name="Brooks K."/>
            <person name="Cherevach I."/>
            <person name="Chillingworth T."/>
            <person name="Woodward J."/>
            <person name="Norberczak H."/>
            <person name="Lord A."/>
            <person name="Arrowsmith C."/>
            <person name="Jagels K."/>
            <person name="Moule S."/>
            <person name="Mungall K."/>
            <person name="Saunders M."/>
            <person name="Whitehead S."/>
            <person name="Chabalgoity J.A."/>
            <person name="Maskell D."/>
            <person name="Humphreys T."/>
            <person name="Roberts M."/>
            <person name="Barrow P.A."/>
            <person name="Dougan G."/>
            <person name="Parkhill J."/>
        </authorList>
    </citation>
    <scope>NUCLEOTIDE SEQUENCE [LARGE SCALE GENOMIC DNA]</scope>
    <source>
        <strain>287/91 / NCTC 13346</strain>
    </source>
</reference>
<sequence length="550" mass="60104">MFCVQCEQTIRTPAGNGCSYAQGMCGKTAETSDLQDLLIAALQGLSAWAVKAREYGIINHDVDNFAPRSFFSTLTNVNFDSPRIVGYAREAIALREALKAQCLSVDANAHCDNPMADLQLVSDDLGELQRQAAEFTPNKDKAAIGENILGLRLLCLYGLKGAAAYMEHAHVLGQYDNDIYAQYHKIMAWLGTWPADMNALLECAMEIGQMNFKVMSILDAGETTKYGHPTPTQVNVKATEGKCILISGHDLKDLYNLLEQTEGTGVNVYTHGEMLPAHGYPELRKFKHLVGNYGSGWQNQQVEFARFPGPIVMTSNCIIDPTVGSYDDRIWTRSIVGWPGVSHLEGDDFGPVIAQAQQMAGFPYSEIPHLITVGFGRQTLLGAADTLIDLVSREKLRHIFLVGGCDGARGERNYFTDFATSVPDDCLILTLACGKYRFNKLEFGDIEGLPRLVDAGQCNDAYSAIILAVTLAEKLGCGVNDLPLSLVLSWFEQKAIVILLTLLSLGVKNIVTGPTAPGFFTPDLLAVLNEKFGLRSVTTVEEDMKQLLSA</sequence>
<evidence type="ECO:0000255" key="1">
    <source>
        <dbReference type="HAMAP-Rule" id="MF_00069"/>
    </source>
</evidence>
<dbReference type="EC" id="1.7.99.1" evidence="1"/>
<dbReference type="EMBL" id="AM933173">
    <property type="protein sequence ID" value="CAR36773.1"/>
    <property type="molecule type" value="Genomic_DNA"/>
</dbReference>
<dbReference type="RefSeq" id="WP_000458795.1">
    <property type="nucleotide sequence ID" value="NC_011274.1"/>
</dbReference>
<dbReference type="SMR" id="B5R885"/>
<dbReference type="KEGG" id="seg:SG0880"/>
<dbReference type="HOGENOM" id="CLU_038344_2_0_6"/>
<dbReference type="Proteomes" id="UP000008321">
    <property type="component" value="Chromosome"/>
</dbReference>
<dbReference type="GO" id="GO:0005737">
    <property type="term" value="C:cytoplasm"/>
    <property type="evidence" value="ECO:0007669"/>
    <property type="project" value="UniProtKB-SubCell"/>
</dbReference>
<dbReference type="GO" id="GO:0051537">
    <property type="term" value="F:2 iron, 2 sulfur cluster binding"/>
    <property type="evidence" value="ECO:0007669"/>
    <property type="project" value="UniProtKB-KW"/>
</dbReference>
<dbReference type="GO" id="GO:0050418">
    <property type="term" value="F:hydroxylamine reductase activity"/>
    <property type="evidence" value="ECO:0007669"/>
    <property type="project" value="UniProtKB-UniRule"/>
</dbReference>
<dbReference type="GO" id="GO:0046872">
    <property type="term" value="F:metal ion binding"/>
    <property type="evidence" value="ECO:0007669"/>
    <property type="project" value="UniProtKB-KW"/>
</dbReference>
<dbReference type="GO" id="GO:0004601">
    <property type="term" value="F:peroxidase activity"/>
    <property type="evidence" value="ECO:0007669"/>
    <property type="project" value="TreeGrafter"/>
</dbReference>
<dbReference type="GO" id="GO:0042542">
    <property type="term" value="P:response to hydrogen peroxide"/>
    <property type="evidence" value="ECO:0007669"/>
    <property type="project" value="TreeGrafter"/>
</dbReference>
<dbReference type="CDD" id="cd01914">
    <property type="entry name" value="HCP"/>
    <property type="match status" value="1"/>
</dbReference>
<dbReference type="FunFam" id="1.20.1270.20:FF:000001">
    <property type="entry name" value="Hydroxylamine reductase"/>
    <property type="match status" value="1"/>
</dbReference>
<dbReference type="FunFam" id="1.20.1270.20:FF:000002">
    <property type="entry name" value="Hydroxylamine reductase"/>
    <property type="match status" value="1"/>
</dbReference>
<dbReference type="FunFam" id="3.40.50.2030:FF:000001">
    <property type="entry name" value="Hydroxylamine reductase"/>
    <property type="match status" value="1"/>
</dbReference>
<dbReference type="FunFam" id="3.40.50.2030:FF:000002">
    <property type="entry name" value="Hydroxylamine reductase"/>
    <property type="match status" value="1"/>
</dbReference>
<dbReference type="Gene3D" id="1.20.1270.20">
    <property type="match status" value="2"/>
</dbReference>
<dbReference type="Gene3D" id="3.40.50.2030">
    <property type="match status" value="2"/>
</dbReference>
<dbReference type="HAMAP" id="MF_00069">
    <property type="entry name" value="Hydroxylam_reduct"/>
    <property type="match status" value="1"/>
</dbReference>
<dbReference type="InterPro" id="IPR004137">
    <property type="entry name" value="HCP/CODH"/>
</dbReference>
<dbReference type="InterPro" id="IPR010048">
    <property type="entry name" value="Hydroxylam_reduct"/>
</dbReference>
<dbReference type="InterPro" id="IPR016099">
    <property type="entry name" value="Prismane-like_a/b-sand"/>
</dbReference>
<dbReference type="InterPro" id="IPR011254">
    <property type="entry name" value="Prismane-like_sf"/>
</dbReference>
<dbReference type="InterPro" id="IPR016100">
    <property type="entry name" value="Prismane_a-bundle"/>
</dbReference>
<dbReference type="NCBIfam" id="TIGR01703">
    <property type="entry name" value="hybrid_clust"/>
    <property type="match status" value="1"/>
</dbReference>
<dbReference type="NCBIfam" id="NF003658">
    <property type="entry name" value="PRK05290.1"/>
    <property type="match status" value="1"/>
</dbReference>
<dbReference type="PANTHER" id="PTHR30109">
    <property type="entry name" value="HYDROXYLAMINE REDUCTASE"/>
    <property type="match status" value="1"/>
</dbReference>
<dbReference type="PANTHER" id="PTHR30109:SF0">
    <property type="entry name" value="HYDROXYLAMINE REDUCTASE"/>
    <property type="match status" value="1"/>
</dbReference>
<dbReference type="Pfam" id="PF03063">
    <property type="entry name" value="Prismane"/>
    <property type="match status" value="1"/>
</dbReference>
<dbReference type="PIRSF" id="PIRSF000076">
    <property type="entry name" value="HCP"/>
    <property type="match status" value="1"/>
</dbReference>
<dbReference type="SUPFAM" id="SSF56821">
    <property type="entry name" value="Prismane protein-like"/>
    <property type="match status" value="1"/>
</dbReference>
<keyword id="KW-0001">2Fe-2S</keyword>
<keyword id="KW-0963">Cytoplasm</keyword>
<keyword id="KW-0408">Iron</keyword>
<keyword id="KW-0411">Iron-sulfur</keyword>
<keyword id="KW-0479">Metal-binding</keyword>
<keyword id="KW-0560">Oxidoreductase</keyword>